<reference key="1">
    <citation type="submission" date="2007-11" db="EMBL/GenBank/DDBJ databases">
        <authorList>
            <consortium name="The Salmonella enterica serovar Arizonae Genome Sequencing Project"/>
            <person name="McClelland M."/>
            <person name="Sanderson E.K."/>
            <person name="Porwollik S."/>
            <person name="Spieth J."/>
            <person name="Clifton W.S."/>
            <person name="Fulton R."/>
            <person name="Chunyan W."/>
            <person name="Wollam A."/>
            <person name="Shah N."/>
            <person name="Pepin K."/>
            <person name="Bhonagiri V."/>
            <person name="Nash W."/>
            <person name="Johnson M."/>
            <person name="Thiruvilangam P."/>
            <person name="Wilson R."/>
        </authorList>
    </citation>
    <scope>NUCLEOTIDE SEQUENCE [LARGE SCALE GENOMIC DNA]</scope>
    <source>
        <strain>ATCC BAA-731 / CDC346-86 / RSK2980</strain>
    </source>
</reference>
<gene>
    <name evidence="1" type="primary">fucU</name>
    <name type="ordered locus">SARI_04684</name>
</gene>
<feature type="chain" id="PRO_1000187190" description="L-fucose mutarotase">
    <location>
        <begin position="1"/>
        <end position="140"/>
    </location>
</feature>
<feature type="active site" description="Proton donor" evidence="1">
    <location>
        <position position="22"/>
    </location>
</feature>
<feature type="binding site" evidence="1">
    <location>
        <position position="30"/>
    </location>
    <ligand>
        <name>substrate</name>
    </ligand>
</feature>
<feature type="binding site" evidence="1">
    <location>
        <position position="107"/>
    </location>
    <ligand>
        <name>substrate</name>
    </ligand>
</feature>
<feature type="binding site" evidence="1">
    <location>
        <begin position="129"/>
        <end position="131"/>
    </location>
    <ligand>
        <name>substrate</name>
    </ligand>
</feature>
<organism>
    <name type="scientific">Salmonella arizonae (strain ATCC BAA-731 / CDC346-86 / RSK2980)</name>
    <dbReference type="NCBI Taxonomy" id="41514"/>
    <lineage>
        <taxon>Bacteria</taxon>
        <taxon>Pseudomonadati</taxon>
        <taxon>Pseudomonadota</taxon>
        <taxon>Gammaproteobacteria</taxon>
        <taxon>Enterobacterales</taxon>
        <taxon>Enterobacteriaceae</taxon>
        <taxon>Salmonella</taxon>
    </lineage>
</organism>
<keyword id="KW-0119">Carbohydrate metabolism</keyword>
<keyword id="KW-0963">Cytoplasm</keyword>
<keyword id="KW-0294">Fucose metabolism</keyword>
<keyword id="KW-0413">Isomerase</keyword>
<keyword id="KW-1185">Reference proteome</keyword>
<protein>
    <recommendedName>
        <fullName evidence="1">L-fucose mutarotase</fullName>
        <ecNumber evidence="1">5.1.3.29</ecNumber>
    </recommendedName>
    <alternativeName>
        <fullName evidence="1">Fucose 1-epimerase</fullName>
    </alternativeName>
    <alternativeName>
        <fullName evidence="1">Type-2 mutarotase</fullName>
    </alternativeName>
</protein>
<evidence type="ECO:0000255" key="1">
    <source>
        <dbReference type="HAMAP-Rule" id="MF_01662"/>
    </source>
</evidence>
<name>FUCM_SALAR</name>
<comment type="function">
    <text evidence="1">Involved in the anomeric conversion of L-fucose.</text>
</comment>
<comment type="catalytic activity">
    <reaction evidence="1">
        <text>alpha-L-fucose = beta-L-fucose</text>
        <dbReference type="Rhea" id="RHEA:25580"/>
        <dbReference type="ChEBI" id="CHEBI:42548"/>
        <dbReference type="ChEBI" id="CHEBI:42589"/>
        <dbReference type="EC" id="5.1.3.29"/>
    </reaction>
</comment>
<comment type="pathway">
    <text evidence="1">Carbohydrate metabolism; L-fucose metabolism.</text>
</comment>
<comment type="subunit">
    <text evidence="1">Homodecamer.</text>
</comment>
<comment type="subcellular location">
    <subcellularLocation>
        <location evidence="1">Cytoplasm</location>
    </subcellularLocation>
</comment>
<comment type="similarity">
    <text evidence="1">Belongs to the RbsD / FucU family. FucU mutarotase subfamily.</text>
</comment>
<sequence>MLKTISPLISPTLLKVLAEMGHGDEIIFSDAHFPAQSLGPQVIRADGLSVSDLLRAIIPLFELDNYAPPLVMMAAVEGDTLDPAVEARYRDALSLEAPCPDIVRIDRYAFYERAQKAFAIVITGECAKYGNILLKKGVTP</sequence>
<dbReference type="EC" id="5.1.3.29" evidence="1"/>
<dbReference type="EMBL" id="CP000880">
    <property type="protein sequence ID" value="ABX24448.1"/>
    <property type="molecule type" value="Genomic_DNA"/>
</dbReference>
<dbReference type="SMR" id="A9MSA4"/>
<dbReference type="STRING" id="41514.SARI_04684"/>
<dbReference type="KEGG" id="ses:SARI_04684"/>
<dbReference type="HOGENOM" id="CLU_120075_1_0_6"/>
<dbReference type="UniPathway" id="UPA00956"/>
<dbReference type="Proteomes" id="UP000002084">
    <property type="component" value="Chromosome"/>
</dbReference>
<dbReference type="GO" id="GO:0005737">
    <property type="term" value="C:cytoplasm"/>
    <property type="evidence" value="ECO:0007669"/>
    <property type="project" value="UniProtKB-SubCell"/>
</dbReference>
<dbReference type="GO" id="GO:0042806">
    <property type="term" value="F:fucose binding"/>
    <property type="evidence" value="ECO:0007669"/>
    <property type="project" value="InterPro"/>
</dbReference>
<dbReference type="GO" id="GO:0036373">
    <property type="term" value="F:L-fucose mutarotase activity"/>
    <property type="evidence" value="ECO:0007669"/>
    <property type="project" value="UniProtKB-EC"/>
</dbReference>
<dbReference type="GO" id="GO:0036065">
    <property type="term" value="P:fucosylation"/>
    <property type="evidence" value="ECO:0007669"/>
    <property type="project" value="TreeGrafter"/>
</dbReference>
<dbReference type="GO" id="GO:0042354">
    <property type="term" value="P:L-fucose metabolic process"/>
    <property type="evidence" value="ECO:0007669"/>
    <property type="project" value="UniProtKB-UniRule"/>
</dbReference>
<dbReference type="FunFam" id="3.40.1650.10:FF:000001">
    <property type="entry name" value="L-fucose mutarotase"/>
    <property type="match status" value="1"/>
</dbReference>
<dbReference type="Gene3D" id="3.40.1650.10">
    <property type="entry name" value="RbsD-like domain"/>
    <property type="match status" value="1"/>
</dbReference>
<dbReference type="HAMAP" id="MF_01662">
    <property type="entry name" value="L_fucose_rotase"/>
    <property type="match status" value="1"/>
</dbReference>
<dbReference type="InterPro" id="IPR023751">
    <property type="entry name" value="L-fucose_mutarotase"/>
</dbReference>
<dbReference type="InterPro" id="IPR023750">
    <property type="entry name" value="RbsD-like_sf"/>
</dbReference>
<dbReference type="InterPro" id="IPR050443">
    <property type="entry name" value="RbsD/FucU_mutarotase"/>
</dbReference>
<dbReference type="InterPro" id="IPR007721">
    <property type="entry name" value="RbsD_FucU"/>
</dbReference>
<dbReference type="NCBIfam" id="NF011949">
    <property type="entry name" value="PRK15420.1"/>
    <property type="match status" value="1"/>
</dbReference>
<dbReference type="PANTHER" id="PTHR31690">
    <property type="entry name" value="FUCOSE MUTAROTASE"/>
    <property type="match status" value="1"/>
</dbReference>
<dbReference type="PANTHER" id="PTHR31690:SF4">
    <property type="entry name" value="FUCOSE MUTAROTASE"/>
    <property type="match status" value="1"/>
</dbReference>
<dbReference type="Pfam" id="PF05025">
    <property type="entry name" value="RbsD_FucU"/>
    <property type="match status" value="1"/>
</dbReference>
<dbReference type="SUPFAM" id="SSF102546">
    <property type="entry name" value="RbsD-like"/>
    <property type="match status" value="1"/>
</dbReference>
<proteinExistence type="inferred from homology"/>
<accession>A9MSA4</accession>